<proteinExistence type="inferred from homology"/>
<organism>
    <name type="scientific">Drosophila pseudoobscura pseudoobscura</name>
    <name type="common">Fruit fly</name>
    <dbReference type="NCBI Taxonomy" id="46245"/>
    <lineage>
        <taxon>Eukaryota</taxon>
        <taxon>Metazoa</taxon>
        <taxon>Ecdysozoa</taxon>
        <taxon>Arthropoda</taxon>
        <taxon>Hexapoda</taxon>
        <taxon>Insecta</taxon>
        <taxon>Pterygota</taxon>
        <taxon>Neoptera</taxon>
        <taxon>Endopterygota</taxon>
        <taxon>Diptera</taxon>
        <taxon>Brachycera</taxon>
        <taxon>Muscomorpha</taxon>
        <taxon>Ephydroidea</taxon>
        <taxon>Drosophilidae</taxon>
        <taxon>Drosophila</taxon>
        <taxon>Sophophora</taxon>
    </lineage>
</organism>
<reference key="1">
    <citation type="journal article" date="1995" name="Mol. Gen. Genet.">
        <title>Separate cis-regulatory sequences control expression of serendipity beta and janus A, two immediately adjacent Drosophila genes.</title>
        <authorList>
            <person name="Yanicostas C."/>
            <person name="Ferrer P."/>
            <person name="Vincent A."/>
            <person name="Lepesant J.-A."/>
        </authorList>
    </citation>
    <scope>NUCLEOTIDE SEQUENCE [GENOMIC DNA]</scope>
</reference>
<reference key="2">
    <citation type="journal article" date="2005" name="Genome Res.">
        <title>Comparative genome sequencing of Drosophila pseudoobscura: chromosomal, gene, and cis-element evolution.</title>
        <authorList>
            <person name="Richards S."/>
            <person name="Liu Y."/>
            <person name="Bettencourt B.R."/>
            <person name="Hradecky P."/>
            <person name="Letovsky S."/>
            <person name="Nielsen R."/>
            <person name="Thornton K."/>
            <person name="Hubisz M.J."/>
            <person name="Chen R."/>
            <person name="Meisel R.P."/>
            <person name="Couronne O."/>
            <person name="Hua S."/>
            <person name="Smith M.A."/>
            <person name="Zhang P."/>
            <person name="Liu J."/>
            <person name="Bussemaker H.J."/>
            <person name="van Batenburg M.F."/>
            <person name="Howells S.L."/>
            <person name="Scherer S.E."/>
            <person name="Sodergren E."/>
            <person name="Matthews B.B."/>
            <person name="Crosby M.A."/>
            <person name="Schroeder A.J."/>
            <person name="Ortiz-Barrientos D."/>
            <person name="Rives C.M."/>
            <person name="Metzker M.L."/>
            <person name="Muzny D.M."/>
            <person name="Scott G."/>
            <person name="Steffen D."/>
            <person name="Wheeler D.A."/>
            <person name="Worley K.C."/>
            <person name="Havlak P."/>
            <person name="Durbin K.J."/>
            <person name="Egan A."/>
            <person name="Gill R."/>
            <person name="Hume J."/>
            <person name="Morgan M.B."/>
            <person name="Miner G."/>
            <person name="Hamilton C."/>
            <person name="Huang Y."/>
            <person name="Waldron L."/>
            <person name="Verduzco D."/>
            <person name="Clerc-Blankenburg K.P."/>
            <person name="Dubchak I."/>
            <person name="Noor M.A.F."/>
            <person name="Anderson W."/>
            <person name="White K.P."/>
            <person name="Clark A.G."/>
            <person name="Schaeffer S.W."/>
            <person name="Gelbart W.M."/>
            <person name="Weinstock G.M."/>
            <person name="Gibbs R.A."/>
        </authorList>
    </citation>
    <scope>NUCLEOTIDE SEQUENCE [LARGE SCALE GENOMIC DNA]</scope>
    <source>
        <strain>MV2-25 / Tucson 14011-0121.94</strain>
    </source>
</reference>
<comment type="function">
    <text evidence="1">JanA and janB regulate somatic sex differentiation.</text>
</comment>
<comment type="similarity">
    <text evidence="2">Belongs to the janus family.</text>
</comment>
<comment type="sequence caution" evidence="2">
    <conflict type="erroneous gene model prediction">
        <sequence resource="EMBL-CDS" id="AAB33912"/>
    </conflict>
</comment>
<comment type="sequence caution" evidence="2">
    <conflict type="erroneous initiation">
        <sequence resource="EMBL-CDS" id="EAL26770"/>
    </conflict>
</comment>
<keyword id="KW-0221">Differentiation</keyword>
<keyword id="KW-1185">Reference proteome</keyword>
<keyword id="KW-0726">Sexual differentiation</keyword>
<accession>P54364</accession>
<accession>Q29C76</accession>
<name>JANA_DROPS</name>
<dbReference type="EMBL" id="S77099">
    <property type="protein sequence ID" value="AAB33912.2"/>
    <property type="status" value="ALT_SEQ"/>
    <property type="molecule type" value="Genomic_DNA"/>
</dbReference>
<dbReference type="EMBL" id="CM000070">
    <property type="protein sequence ID" value="EAL26770.2"/>
    <property type="status" value="ALT_INIT"/>
    <property type="molecule type" value="Genomic_DNA"/>
</dbReference>
<dbReference type="RefSeq" id="XP_003736221.1">
    <property type="nucleotide sequence ID" value="XM_003736173.2"/>
</dbReference>
<dbReference type="SMR" id="P54364"/>
<dbReference type="FunCoup" id="P54364">
    <property type="interactions" value="1357"/>
</dbReference>
<dbReference type="STRING" id="46245.P54364"/>
<dbReference type="EnsemblMetazoa" id="FBtr0303050">
    <property type="protein sequence ID" value="FBpp0292169"/>
    <property type="gene ID" value="FBgn0015151"/>
</dbReference>
<dbReference type="GeneID" id="4800256"/>
<dbReference type="KEGG" id="dpo:4800256"/>
<dbReference type="CTD" id="43569"/>
<dbReference type="eggNOG" id="ENOG502S4DR">
    <property type="taxonomic scope" value="Eukaryota"/>
</dbReference>
<dbReference type="InParanoid" id="P54364"/>
<dbReference type="OMA" id="VRGYSWA"/>
<dbReference type="Proteomes" id="UP000001819">
    <property type="component" value="Chromosome 2"/>
</dbReference>
<dbReference type="Bgee" id="FBgn0015151">
    <property type="expression patterns" value="Expressed in female reproductive system and 2 other cell types or tissues"/>
</dbReference>
<dbReference type="GO" id="GO:0005829">
    <property type="term" value="C:cytosol"/>
    <property type="evidence" value="ECO:0007669"/>
    <property type="project" value="TreeGrafter"/>
</dbReference>
<dbReference type="GO" id="GO:0101006">
    <property type="term" value="F:protein histidine phosphatase activity"/>
    <property type="evidence" value="ECO:0007669"/>
    <property type="project" value="TreeGrafter"/>
</dbReference>
<dbReference type="GO" id="GO:0030154">
    <property type="term" value="P:cell differentiation"/>
    <property type="evidence" value="ECO:0007669"/>
    <property type="project" value="UniProtKB-KW"/>
</dbReference>
<dbReference type="GO" id="GO:0007548">
    <property type="term" value="P:sex differentiation"/>
    <property type="evidence" value="ECO:0000250"/>
    <property type="project" value="UniProtKB"/>
</dbReference>
<dbReference type="FunFam" id="3.50.20.20:FF:000001">
    <property type="entry name" value="14 kDa phosphohistidine phosphatase"/>
    <property type="match status" value="1"/>
</dbReference>
<dbReference type="Gene3D" id="3.50.20.20">
    <property type="entry name" value="Janus/Ocnus"/>
    <property type="match status" value="1"/>
</dbReference>
<dbReference type="InterPro" id="IPR007702">
    <property type="entry name" value="Janus"/>
</dbReference>
<dbReference type="InterPro" id="IPR038596">
    <property type="entry name" value="Janus_sf"/>
</dbReference>
<dbReference type="PANTHER" id="PTHR12258:SF5">
    <property type="entry name" value="BCDNA.GH02250-RELATED"/>
    <property type="match status" value="1"/>
</dbReference>
<dbReference type="PANTHER" id="PTHR12258">
    <property type="entry name" value="JANUS-A/JANUS-B"/>
    <property type="match status" value="1"/>
</dbReference>
<dbReference type="Pfam" id="PF05005">
    <property type="entry name" value="Ocnus"/>
    <property type="match status" value="1"/>
</dbReference>
<dbReference type="SUPFAM" id="SSF143724">
    <property type="entry name" value="PHP14-like"/>
    <property type="match status" value="1"/>
</dbReference>
<protein>
    <recommendedName>
        <fullName>Sex-regulated protein janus-A</fullName>
    </recommendedName>
</protein>
<evidence type="ECO:0000250" key="1"/>
<evidence type="ECO:0000305" key="2"/>
<feature type="chain" id="PRO_0000206160" description="Sex-regulated protein janus-A">
    <location>
        <begin position="1"/>
        <end position="149"/>
    </location>
</feature>
<feature type="active site" description="Proton acceptor" evidence="1">
    <location>
        <position position="77"/>
    </location>
</feature>
<feature type="binding site" evidence="1">
    <location>
        <position position="46"/>
    </location>
    <ligand>
        <name>substrate</name>
    </ligand>
</feature>
<feature type="binding site" evidence="1">
    <location>
        <begin position="118"/>
        <end position="120"/>
    </location>
    <ligand>
        <name>substrate</name>
    </ligand>
</feature>
<sequence>MLKAAAAALYRKNSNFLQGLRLLHKMSDQDLAKIPLVDIDEEGIFKYILIRVTGKETADGTEPSKLVVRGYADCEWHADIYERTQGTIKGTGLDTECLGGGRIEHNPEKKYLKVYGHSTGYGKADHAESKRVLLTKYKNYEIETSDEGY</sequence>
<gene>
    <name type="primary">janA</name>
    <name type="ORF">GA20699</name>
</gene>